<evidence type="ECO:0000250" key="1"/>
<evidence type="ECO:0000305" key="2"/>
<protein>
    <recommendedName>
        <fullName>Protein DML1</fullName>
    </recommendedName>
</protein>
<comment type="function">
    <text evidence="1">Involved in the partitioning of the mitochondrial organelle and mitochondrial DNA (mtDNA) inheritance.</text>
</comment>
<comment type="subcellular location">
    <subcellularLocation>
        <location evidence="1">Mitochondrion</location>
    </subcellularLocation>
</comment>
<comment type="similarity">
    <text evidence="2">Belongs to the misato family.</text>
</comment>
<gene>
    <name type="primary">DML1</name>
    <name type="ORF">FGRAMPH1_01T17793</name>
    <name type="ORF">FGRRES_05390</name>
    <name type="ORF">FGSG_05390</name>
</gene>
<reference key="1">
    <citation type="journal article" date="2007" name="Science">
        <title>The Fusarium graminearum genome reveals a link between localized polymorphism and pathogen specialization.</title>
        <authorList>
            <person name="Cuomo C.A."/>
            <person name="Gueldener U."/>
            <person name="Xu J.-R."/>
            <person name="Trail F."/>
            <person name="Turgeon B.G."/>
            <person name="Di Pietro A."/>
            <person name="Walton J.D."/>
            <person name="Ma L.-J."/>
            <person name="Baker S.E."/>
            <person name="Rep M."/>
            <person name="Adam G."/>
            <person name="Antoniw J."/>
            <person name="Baldwin T."/>
            <person name="Calvo S.E."/>
            <person name="Chang Y.-L."/>
            <person name="DeCaprio D."/>
            <person name="Gale L.R."/>
            <person name="Gnerre S."/>
            <person name="Goswami R.S."/>
            <person name="Hammond-Kosack K."/>
            <person name="Harris L.J."/>
            <person name="Hilburn K."/>
            <person name="Kennell J.C."/>
            <person name="Kroken S."/>
            <person name="Magnuson J.K."/>
            <person name="Mannhaupt G."/>
            <person name="Mauceli E.W."/>
            <person name="Mewes H.-W."/>
            <person name="Mitterbauer R."/>
            <person name="Muehlbauer G."/>
            <person name="Muensterkoetter M."/>
            <person name="Nelson D."/>
            <person name="O'Donnell K."/>
            <person name="Ouellet T."/>
            <person name="Qi W."/>
            <person name="Quesneville H."/>
            <person name="Roncero M.I.G."/>
            <person name="Seong K.-Y."/>
            <person name="Tetko I.V."/>
            <person name="Urban M."/>
            <person name="Waalwijk C."/>
            <person name="Ward T.J."/>
            <person name="Yao J."/>
            <person name="Birren B.W."/>
            <person name="Kistler H.C."/>
        </authorList>
    </citation>
    <scope>NUCLEOTIDE SEQUENCE [LARGE SCALE GENOMIC DNA]</scope>
    <source>
        <strain>ATCC MYA-4620 / CBS 123657 / FGSC 9075 / NRRL 31084 / PH-1</strain>
    </source>
</reference>
<reference key="2">
    <citation type="journal article" date="2010" name="Nature">
        <title>Comparative genomics reveals mobile pathogenicity chromosomes in Fusarium.</title>
        <authorList>
            <person name="Ma L.-J."/>
            <person name="van der Does H.C."/>
            <person name="Borkovich K.A."/>
            <person name="Coleman J.J."/>
            <person name="Daboussi M.-J."/>
            <person name="Di Pietro A."/>
            <person name="Dufresne M."/>
            <person name="Freitag M."/>
            <person name="Grabherr M."/>
            <person name="Henrissat B."/>
            <person name="Houterman P.M."/>
            <person name="Kang S."/>
            <person name="Shim W.-B."/>
            <person name="Woloshuk C."/>
            <person name="Xie X."/>
            <person name="Xu J.-R."/>
            <person name="Antoniw J."/>
            <person name="Baker S.E."/>
            <person name="Bluhm B.H."/>
            <person name="Breakspear A."/>
            <person name="Brown D.W."/>
            <person name="Butchko R.A.E."/>
            <person name="Chapman S."/>
            <person name="Coulson R."/>
            <person name="Coutinho P.M."/>
            <person name="Danchin E.G.J."/>
            <person name="Diener A."/>
            <person name="Gale L.R."/>
            <person name="Gardiner D.M."/>
            <person name="Goff S."/>
            <person name="Hammond-Kosack K.E."/>
            <person name="Hilburn K."/>
            <person name="Hua-Van A."/>
            <person name="Jonkers W."/>
            <person name="Kazan K."/>
            <person name="Kodira C.D."/>
            <person name="Koehrsen M."/>
            <person name="Kumar L."/>
            <person name="Lee Y.-H."/>
            <person name="Li L."/>
            <person name="Manners J.M."/>
            <person name="Miranda-Saavedra D."/>
            <person name="Mukherjee M."/>
            <person name="Park G."/>
            <person name="Park J."/>
            <person name="Park S.-Y."/>
            <person name="Proctor R.H."/>
            <person name="Regev A."/>
            <person name="Ruiz-Roldan M.C."/>
            <person name="Sain D."/>
            <person name="Sakthikumar S."/>
            <person name="Sykes S."/>
            <person name="Schwartz D.C."/>
            <person name="Turgeon B.G."/>
            <person name="Wapinski I."/>
            <person name="Yoder O."/>
            <person name="Young S."/>
            <person name="Zeng Q."/>
            <person name="Zhou S."/>
            <person name="Galagan J."/>
            <person name="Cuomo C.A."/>
            <person name="Kistler H.C."/>
            <person name="Rep M."/>
        </authorList>
    </citation>
    <scope>GENOME REANNOTATION</scope>
    <source>
        <strain>ATCC MYA-4620 / CBS 123657 / FGSC 9075 / NRRL 31084 / PH-1</strain>
    </source>
</reference>
<reference key="3">
    <citation type="journal article" date="2015" name="BMC Genomics">
        <title>The completed genome sequence of the pathogenic ascomycete fungus Fusarium graminearum.</title>
        <authorList>
            <person name="King R."/>
            <person name="Urban M."/>
            <person name="Hammond-Kosack M.C.U."/>
            <person name="Hassani-Pak K."/>
            <person name="Hammond-Kosack K.E."/>
        </authorList>
    </citation>
    <scope>NUCLEOTIDE SEQUENCE [LARGE SCALE GENOMIC DNA]</scope>
    <source>
        <strain>ATCC MYA-4620 / CBS 123657 / FGSC 9075 / NRRL 31084 / PH-1</strain>
    </source>
</reference>
<dbReference type="EMBL" id="DS231665">
    <property type="protein sequence ID" value="ESU11342.1"/>
    <property type="molecule type" value="Genomic_DNA"/>
</dbReference>
<dbReference type="EMBL" id="HG970334">
    <property type="protein sequence ID" value="SCB64748.1"/>
    <property type="molecule type" value="Genomic_DNA"/>
</dbReference>
<dbReference type="RefSeq" id="XP_011323918.1">
    <property type="nucleotide sequence ID" value="XM_011325616.1"/>
</dbReference>
<dbReference type="FunCoup" id="Q4IBL8">
    <property type="interactions" value="80"/>
</dbReference>
<dbReference type="GeneID" id="23552574"/>
<dbReference type="KEGG" id="fgr:FGSG_05390"/>
<dbReference type="VEuPathDB" id="FungiDB:FGRAMPH1_01G17793"/>
<dbReference type="eggNOG" id="KOG2530">
    <property type="taxonomic scope" value="Eukaryota"/>
</dbReference>
<dbReference type="HOGENOM" id="CLU_022511_2_0_1"/>
<dbReference type="InParanoid" id="Q4IBL8"/>
<dbReference type="OrthoDB" id="119517at110618"/>
<dbReference type="Proteomes" id="UP000070720">
    <property type="component" value="Chromosome 3"/>
</dbReference>
<dbReference type="GO" id="GO:0005739">
    <property type="term" value="C:mitochondrion"/>
    <property type="evidence" value="ECO:0007669"/>
    <property type="project" value="UniProtKB-SubCell"/>
</dbReference>
<dbReference type="GO" id="GO:0007005">
    <property type="term" value="P:mitochondrion organization"/>
    <property type="evidence" value="ECO:0007669"/>
    <property type="project" value="InterPro"/>
</dbReference>
<dbReference type="CDD" id="cd06060">
    <property type="entry name" value="misato"/>
    <property type="match status" value="1"/>
</dbReference>
<dbReference type="Gene3D" id="3.40.50.1440">
    <property type="entry name" value="Tubulin/FtsZ, GTPase domain"/>
    <property type="match status" value="1"/>
</dbReference>
<dbReference type="InterPro" id="IPR013838">
    <property type="entry name" value="Beta-tubulin_BS"/>
</dbReference>
<dbReference type="InterPro" id="IPR049942">
    <property type="entry name" value="DML1/Misato"/>
</dbReference>
<dbReference type="InterPro" id="IPR029209">
    <property type="entry name" value="DML1/Misato_tubulin"/>
</dbReference>
<dbReference type="InterPro" id="IPR019605">
    <property type="entry name" value="Misato_II_tubulin-like"/>
</dbReference>
<dbReference type="InterPro" id="IPR036525">
    <property type="entry name" value="Tubulin/FtsZ_GTPase_sf"/>
</dbReference>
<dbReference type="PANTHER" id="PTHR13391">
    <property type="entry name" value="MITOCHONDRIAL DISTRIBUTION REGULATOR MISATO"/>
    <property type="match status" value="1"/>
</dbReference>
<dbReference type="PANTHER" id="PTHR13391:SF0">
    <property type="entry name" value="PROTEIN MISATO HOMOLOG 1"/>
    <property type="match status" value="1"/>
</dbReference>
<dbReference type="Pfam" id="PF10644">
    <property type="entry name" value="Misat_Tub_SegII"/>
    <property type="match status" value="1"/>
</dbReference>
<dbReference type="Pfam" id="PF14881">
    <property type="entry name" value="Tubulin_3"/>
    <property type="match status" value="1"/>
</dbReference>
<dbReference type="SUPFAM" id="SSF52490">
    <property type="entry name" value="Tubulin nucleotide-binding domain-like"/>
    <property type="match status" value="1"/>
</dbReference>
<sequence>MREIVTLQLGQLSNYTATHFWNAQESYFTYSSDEKSLIDHNVHWRAGLGADGSETFLPRTVIYDLKGGFGSLRKINALYEAESESAPEALWSGQSVVHKQTPITPSEYQQSLDAGSEPAQLTTSNVRYWSDFSRVYFHPKSLNQLYDFELNSTTMPFERFSMGTELFSMLDREHDLADRDFRPFAEECDRMQGIQVFTTIDDAWGGFTSSYLESLRDDFPKTTIWTWGLQSPLLDISRAKRQLRLVNTAHSIEQLCTQSTTVVPLALPEEDMTTSVSMDRRSPWHTSALMAAAIETATLPSRLTQGSSEQAGSLDVLAESLNVNGNQPLASMRMSLAPAKDSPEDSRINVDFFQVGRVWSRQHVARLDTHKHVFGEILSYRDLDPLGHDNENGHLAPGERPIIGNSIVRKYDSALRFPLLDAYPQIYPQLAGNSDASLQTTLSTNSSIVQRIRTLRTESARLVPVNEREDLGNGLADLADAYQEGWFSGSDEDDDDL</sequence>
<keyword id="KW-0496">Mitochondrion</keyword>
<keyword id="KW-1185">Reference proteome</keyword>
<accession>Q4IBL8</accession>
<accession>A0A0E0SLX9</accession>
<accession>A0A1C3YJM9</accession>
<accession>V6RBJ1</accession>
<organism>
    <name type="scientific">Gibberella zeae (strain ATCC MYA-4620 / CBS 123657 / FGSC 9075 / NRRL 31084 / PH-1)</name>
    <name type="common">Wheat head blight fungus</name>
    <name type="synonym">Fusarium graminearum</name>
    <dbReference type="NCBI Taxonomy" id="229533"/>
    <lineage>
        <taxon>Eukaryota</taxon>
        <taxon>Fungi</taxon>
        <taxon>Dikarya</taxon>
        <taxon>Ascomycota</taxon>
        <taxon>Pezizomycotina</taxon>
        <taxon>Sordariomycetes</taxon>
        <taxon>Hypocreomycetidae</taxon>
        <taxon>Hypocreales</taxon>
        <taxon>Nectriaceae</taxon>
        <taxon>Fusarium</taxon>
    </lineage>
</organism>
<feature type="chain" id="PRO_0000285335" description="Protein DML1">
    <location>
        <begin position="1"/>
        <end position="497"/>
    </location>
</feature>
<name>DML1_GIBZE</name>
<proteinExistence type="inferred from homology"/>